<dbReference type="EMBL" id="AE015928">
    <property type="protein sequence ID" value="AAO77821.1"/>
    <property type="molecule type" value="Genomic_DNA"/>
</dbReference>
<dbReference type="RefSeq" id="NP_811627.1">
    <property type="nucleotide sequence ID" value="NC_004663.1"/>
</dbReference>
<dbReference type="RefSeq" id="WP_005675434.1">
    <property type="nucleotide sequence ID" value="NZ_UYXG01000001.1"/>
</dbReference>
<dbReference type="SMR" id="Q8A488"/>
<dbReference type="FunCoup" id="Q8A488">
    <property type="interactions" value="605"/>
</dbReference>
<dbReference type="STRING" id="226186.BT_2715"/>
<dbReference type="PaxDb" id="226186-BT_2715"/>
<dbReference type="EnsemblBacteria" id="AAO77821">
    <property type="protein sequence ID" value="AAO77821"/>
    <property type="gene ID" value="BT_2715"/>
</dbReference>
<dbReference type="GeneID" id="75111659"/>
<dbReference type="KEGG" id="bth:BT_2715"/>
<dbReference type="PATRIC" id="fig|226186.12.peg.2758"/>
<dbReference type="eggNOG" id="COG0094">
    <property type="taxonomic scope" value="Bacteria"/>
</dbReference>
<dbReference type="HOGENOM" id="CLU_061015_2_1_10"/>
<dbReference type="InParanoid" id="Q8A488"/>
<dbReference type="OrthoDB" id="9806626at2"/>
<dbReference type="Proteomes" id="UP000001414">
    <property type="component" value="Chromosome"/>
</dbReference>
<dbReference type="GO" id="GO:0022625">
    <property type="term" value="C:cytosolic large ribosomal subunit"/>
    <property type="evidence" value="ECO:0000318"/>
    <property type="project" value="GO_Central"/>
</dbReference>
<dbReference type="GO" id="GO:0003723">
    <property type="term" value="F:RNA binding"/>
    <property type="evidence" value="ECO:0000318"/>
    <property type="project" value="GO_Central"/>
</dbReference>
<dbReference type="GO" id="GO:0019843">
    <property type="term" value="F:rRNA binding"/>
    <property type="evidence" value="ECO:0007669"/>
    <property type="project" value="UniProtKB-UniRule"/>
</dbReference>
<dbReference type="GO" id="GO:0003735">
    <property type="term" value="F:structural constituent of ribosome"/>
    <property type="evidence" value="ECO:0000318"/>
    <property type="project" value="GO_Central"/>
</dbReference>
<dbReference type="GO" id="GO:0000049">
    <property type="term" value="F:tRNA binding"/>
    <property type="evidence" value="ECO:0007669"/>
    <property type="project" value="UniProtKB-UniRule"/>
</dbReference>
<dbReference type="GO" id="GO:0006412">
    <property type="term" value="P:translation"/>
    <property type="evidence" value="ECO:0000318"/>
    <property type="project" value="GO_Central"/>
</dbReference>
<dbReference type="FunFam" id="3.30.1440.10:FF:000001">
    <property type="entry name" value="50S ribosomal protein L5"/>
    <property type="match status" value="1"/>
</dbReference>
<dbReference type="Gene3D" id="3.30.1440.10">
    <property type="match status" value="1"/>
</dbReference>
<dbReference type="HAMAP" id="MF_01333_B">
    <property type="entry name" value="Ribosomal_uL5_B"/>
    <property type="match status" value="1"/>
</dbReference>
<dbReference type="InterPro" id="IPR002132">
    <property type="entry name" value="Ribosomal_uL5"/>
</dbReference>
<dbReference type="InterPro" id="IPR020930">
    <property type="entry name" value="Ribosomal_uL5_bac-type"/>
</dbReference>
<dbReference type="InterPro" id="IPR031309">
    <property type="entry name" value="Ribosomal_uL5_C"/>
</dbReference>
<dbReference type="InterPro" id="IPR022803">
    <property type="entry name" value="Ribosomal_uL5_dom_sf"/>
</dbReference>
<dbReference type="InterPro" id="IPR031310">
    <property type="entry name" value="Ribosomal_uL5_N"/>
</dbReference>
<dbReference type="NCBIfam" id="NF000585">
    <property type="entry name" value="PRK00010.1"/>
    <property type="match status" value="1"/>
</dbReference>
<dbReference type="PANTHER" id="PTHR11994">
    <property type="entry name" value="60S RIBOSOMAL PROTEIN L11-RELATED"/>
    <property type="match status" value="1"/>
</dbReference>
<dbReference type="Pfam" id="PF00281">
    <property type="entry name" value="Ribosomal_L5"/>
    <property type="match status" value="1"/>
</dbReference>
<dbReference type="Pfam" id="PF00673">
    <property type="entry name" value="Ribosomal_L5_C"/>
    <property type="match status" value="1"/>
</dbReference>
<dbReference type="PIRSF" id="PIRSF002161">
    <property type="entry name" value="Ribosomal_L5"/>
    <property type="match status" value="1"/>
</dbReference>
<dbReference type="SUPFAM" id="SSF55282">
    <property type="entry name" value="RL5-like"/>
    <property type="match status" value="1"/>
</dbReference>
<proteinExistence type="inferred from homology"/>
<reference key="1">
    <citation type="journal article" date="2003" name="Science">
        <title>A genomic view of the human-Bacteroides thetaiotaomicron symbiosis.</title>
        <authorList>
            <person name="Xu J."/>
            <person name="Bjursell M.K."/>
            <person name="Himrod J."/>
            <person name="Deng S."/>
            <person name="Carmichael L.K."/>
            <person name="Chiang H.C."/>
            <person name="Hooper L.V."/>
            <person name="Gordon J.I."/>
        </authorList>
    </citation>
    <scope>NUCLEOTIDE SEQUENCE [LARGE SCALE GENOMIC DNA]</scope>
    <source>
        <strain>ATCC 29148 / DSM 2079 / JCM 5827 / CCUG 10774 / NCTC 10582 / VPI-5482 / E50</strain>
    </source>
</reference>
<name>RL5_BACTN</name>
<keyword id="KW-1185">Reference proteome</keyword>
<keyword id="KW-0687">Ribonucleoprotein</keyword>
<keyword id="KW-0689">Ribosomal protein</keyword>
<keyword id="KW-0694">RNA-binding</keyword>
<keyword id="KW-0699">rRNA-binding</keyword>
<keyword id="KW-0820">tRNA-binding</keyword>
<comment type="function">
    <text evidence="1">This is one of the proteins that bind and probably mediate the attachment of the 5S RNA into the large ribosomal subunit, where it forms part of the central protuberance. In the 70S ribosome it contacts protein S13 of the 30S subunit (bridge B1b), connecting the 2 subunits; this bridge is implicated in subunit movement. Contacts the P site tRNA; the 5S rRNA and some of its associated proteins might help stabilize positioning of ribosome-bound tRNAs.</text>
</comment>
<comment type="subunit">
    <text evidence="1">Part of the 50S ribosomal subunit; part of the 5S rRNA/L5/L18/L25 subcomplex. Contacts the 5S rRNA and the P site tRNA. Forms a bridge to the 30S subunit in the 70S ribosome.</text>
</comment>
<comment type="similarity">
    <text evidence="1">Belongs to the universal ribosomal protein uL5 family.</text>
</comment>
<protein>
    <recommendedName>
        <fullName evidence="1">Large ribosomal subunit protein uL5</fullName>
    </recommendedName>
    <alternativeName>
        <fullName evidence="2">50S ribosomal protein L5</fullName>
    </alternativeName>
</protein>
<gene>
    <name evidence="1" type="primary">rplE</name>
    <name type="ordered locus">BT_2715</name>
</gene>
<sequence length="185" mass="20853">MSNTASLKKEYADRIAPALKSQFQYSSTMQVPVLKKIVINQGLGMAVADKKIIEVAINEMTAITGQKAVATISRKDIANFKLRKKMPIGVMVTLRRERMYEFLEKLVRVALPRIRDFKGIESKFDGKGNYTLGIQEQIIFPEINIDSITRILGMNITFVTSAETDEEGYALLKEFGLPFKNAKKD</sequence>
<evidence type="ECO:0000255" key="1">
    <source>
        <dbReference type="HAMAP-Rule" id="MF_01333"/>
    </source>
</evidence>
<evidence type="ECO:0000305" key="2"/>
<accession>Q8A488</accession>
<organism>
    <name type="scientific">Bacteroides thetaiotaomicron (strain ATCC 29148 / DSM 2079 / JCM 5827 / CCUG 10774 / NCTC 10582 / VPI-5482 / E50)</name>
    <dbReference type="NCBI Taxonomy" id="226186"/>
    <lineage>
        <taxon>Bacteria</taxon>
        <taxon>Pseudomonadati</taxon>
        <taxon>Bacteroidota</taxon>
        <taxon>Bacteroidia</taxon>
        <taxon>Bacteroidales</taxon>
        <taxon>Bacteroidaceae</taxon>
        <taxon>Bacteroides</taxon>
    </lineage>
</organism>
<feature type="chain" id="PRO_0000124893" description="Large ribosomal subunit protein uL5">
    <location>
        <begin position="1"/>
        <end position="185"/>
    </location>
</feature>